<protein>
    <recommendedName>
        <fullName>G1/S-specific cyclin-E</fullName>
    </recommendedName>
</protein>
<dbReference type="EMBL" id="AB008363">
    <property type="protein sequence ID" value="BAA22990.1"/>
    <property type="molecule type" value="mRNA"/>
</dbReference>
<dbReference type="SMR" id="O15995"/>
<dbReference type="GO" id="GO:0005634">
    <property type="term" value="C:nucleus"/>
    <property type="evidence" value="ECO:0007669"/>
    <property type="project" value="UniProtKB-SubCell"/>
</dbReference>
<dbReference type="GO" id="GO:0051301">
    <property type="term" value="P:cell division"/>
    <property type="evidence" value="ECO:0007669"/>
    <property type="project" value="UniProtKB-KW"/>
</dbReference>
<dbReference type="CDD" id="cd20519">
    <property type="entry name" value="CYCLIN_CCNE_rpt1"/>
    <property type="match status" value="1"/>
</dbReference>
<dbReference type="CDD" id="cd20520">
    <property type="entry name" value="CYCLIN_CCNE_rpt2"/>
    <property type="match status" value="1"/>
</dbReference>
<dbReference type="FunFam" id="1.10.472.10:FF:000024">
    <property type="entry name" value="G1/S-specific cyclin-E1"/>
    <property type="match status" value="1"/>
</dbReference>
<dbReference type="Gene3D" id="1.10.472.10">
    <property type="entry name" value="Cyclin-like"/>
    <property type="match status" value="2"/>
</dbReference>
<dbReference type="InterPro" id="IPR039361">
    <property type="entry name" value="Cyclin"/>
</dbReference>
<dbReference type="InterPro" id="IPR013763">
    <property type="entry name" value="Cyclin-like_dom"/>
</dbReference>
<dbReference type="InterPro" id="IPR036915">
    <property type="entry name" value="Cyclin-like_sf"/>
</dbReference>
<dbReference type="InterPro" id="IPR004367">
    <property type="entry name" value="Cyclin_C-dom"/>
</dbReference>
<dbReference type="InterPro" id="IPR006671">
    <property type="entry name" value="Cyclin_N"/>
</dbReference>
<dbReference type="PANTHER" id="PTHR10177">
    <property type="entry name" value="CYCLINS"/>
    <property type="match status" value="1"/>
</dbReference>
<dbReference type="Pfam" id="PF02984">
    <property type="entry name" value="Cyclin_C"/>
    <property type="match status" value="1"/>
</dbReference>
<dbReference type="Pfam" id="PF00134">
    <property type="entry name" value="Cyclin_N"/>
    <property type="match status" value="1"/>
</dbReference>
<dbReference type="SMART" id="SM00385">
    <property type="entry name" value="CYCLIN"/>
    <property type="match status" value="1"/>
</dbReference>
<dbReference type="SMART" id="SM01332">
    <property type="entry name" value="Cyclin_C"/>
    <property type="match status" value="1"/>
</dbReference>
<dbReference type="SUPFAM" id="SSF47954">
    <property type="entry name" value="Cyclin-like"/>
    <property type="match status" value="2"/>
</dbReference>
<reference key="1">
    <citation type="journal article" date="1997" name="Zool. Sci.">
        <title>Cloning of cyclin E cDNA of the sea urchin, Hemicentrotus pulcherrimus.</title>
        <authorList>
            <person name="Kurokawa D."/>
            <person name="Akasaka K."/>
            <person name="Mitsunaga-Nakatsubo K."/>
            <person name="Shimada H."/>
        </authorList>
    </citation>
    <scope>NUCLEOTIDE SEQUENCE [MRNA]</scope>
</reference>
<name>CCNE_HEMPU</name>
<proteinExistence type="evidence at transcript level"/>
<gene>
    <name type="primary">CYCE</name>
</gene>
<accession>O15995</accession>
<feature type="chain" id="PRO_0000080460" description="G1/S-specific cyclin-E">
    <location>
        <begin position="1"/>
        <end position="424"/>
    </location>
</feature>
<feature type="region of interest" description="Disordered" evidence="2">
    <location>
        <begin position="1"/>
        <end position="25"/>
    </location>
</feature>
<feature type="compositionally biased region" description="Polar residues" evidence="2">
    <location>
        <begin position="7"/>
        <end position="17"/>
    </location>
</feature>
<feature type="modified residue" description="Phosphothreonine" evidence="1">
    <location>
        <position position="411"/>
    </location>
</feature>
<evidence type="ECO:0000250" key="1"/>
<evidence type="ECO:0000256" key="2">
    <source>
        <dbReference type="SAM" id="MobiDB-lite"/>
    </source>
</evidence>
<evidence type="ECO:0000305" key="3"/>
<comment type="function">
    <text>Essential for the control of the cell cycle at the G1/S (start) transition.</text>
</comment>
<comment type="subunit">
    <text evidence="1">Interacts with a member of the CDK2/CDK protein kinases to form a serine/threonine kinase holoenzyme complex. The cyclin subunit imparts substrate specificity to the complex (By similarity).</text>
</comment>
<comment type="subcellular location">
    <subcellularLocation>
        <location evidence="1">Nucleus</location>
    </subcellularLocation>
</comment>
<comment type="similarity">
    <text evidence="3">Belongs to the cyclin family. Cyclin E subfamily.</text>
</comment>
<organism>
    <name type="scientific">Hemicentrotus pulcherrimus</name>
    <name type="common">Sea urchin</name>
    <name type="synonym">Strongylocentrotus pulcherrimus</name>
    <dbReference type="NCBI Taxonomy" id="7650"/>
    <lineage>
        <taxon>Eukaryota</taxon>
        <taxon>Metazoa</taxon>
        <taxon>Echinodermata</taxon>
        <taxon>Eleutherozoa</taxon>
        <taxon>Echinozoa</taxon>
        <taxon>Echinoidea</taxon>
        <taxon>Euechinoidea</taxon>
        <taxon>Echinacea</taxon>
        <taxon>Camarodonta</taxon>
        <taxon>Echinidea</taxon>
        <taxon>Strongylocentrotidae</taxon>
        <taxon>Hemicentrotus</taxon>
    </lineage>
</organism>
<sequence>MSRRSGRLQSRQDNQPLTECISDENNLPMCTRKRKTREQDTTGVSKAEEVQRRRQQFTIENRWVPISESSSIETSLLVPMQTKEPSTPSEELMDTANWVTFRNLFPAHVSDRASPIPLLHWDDLPEVWTIMTRKEALCPRKHDCLKSHPSLGERMRAILLDWLIEVCEVYRLHRESFYLAADFVDRYLAAKENVPKTKLQLIGITSLFVAAKLEEIYPPKLHEFAYVTDGACTDDQILDQELIMLMTLNWDLTPITVNTWLNAFMQICNAEEIANRKTNFHFPSYSSTEFVQVAQLLDVCTLDIGSMDFDYSILAASALYHVTNEEVTLSVTGLKWDDIAACVQWMSTFAMTIREVGVAQLKNFKNIYAGDAHNIQTHCSSLELLDKSHEKQRLLREASCCSPVQVPGVLTPPQSDKKSKKGVL</sequence>
<keyword id="KW-0131">Cell cycle</keyword>
<keyword id="KW-0132">Cell division</keyword>
<keyword id="KW-0195">Cyclin</keyword>
<keyword id="KW-0539">Nucleus</keyword>
<keyword id="KW-0597">Phosphoprotein</keyword>